<dbReference type="EC" id="1.1.1.-"/>
<dbReference type="EMBL" id="AC002292">
    <property type="protein sequence ID" value="AAB71980.1"/>
    <property type="status" value="ALT_SEQ"/>
    <property type="molecule type" value="Genomic_DNA"/>
</dbReference>
<dbReference type="EMBL" id="CP002684">
    <property type="protein sequence ID" value="AEE33719.1"/>
    <property type="molecule type" value="Genomic_DNA"/>
</dbReference>
<dbReference type="EMBL" id="BT006462">
    <property type="protein sequence ID" value="AAP21270.1"/>
    <property type="molecule type" value="mRNA"/>
</dbReference>
<dbReference type="EMBL" id="AK227526">
    <property type="protein sequence ID" value="BAE99526.1"/>
    <property type="molecule type" value="mRNA"/>
</dbReference>
<dbReference type="PIR" id="B96632">
    <property type="entry name" value="B96632"/>
</dbReference>
<dbReference type="RefSeq" id="NP_176267.3">
    <property type="nucleotide sequence ID" value="NM_104751.5"/>
</dbReference>
<dbReference type="SMR" id="Q84M96"/>
<dbReference type="FunCoup" id="Q84M96">
    <property type="interactions" value="77"/>
</dbReference>
<dbReference type="STRING" id="3702.Q84M96"/>
<dbReference type="iPTMnet" id="Q84M96"/>
<dbReference type="PaxDb" id="3702-AT1G60680.1"/>
<dbReference type="ProteomicsDB" id="244999"/>
<dbReference type="EnsemblPlants" id="AT1G60680.1">
    <property type="protein sequence ID" value="AT1G60680.1"/>
    <property type="gene ID" value="AT1G60680"/>
</dbReference>
<dbReference type="GeneID" id="842362"/>
<dbReference type="Gramene" id="AT1G60680.1">
    <property type="protein sequence ID" value="AT1G60680.1"/>
    <property type="gene ID" value="AT1G60680"/>
</dbReference>
<dbReference type="KEGG" id="ath:AT1G60680"/>
<dbReference type="Araport" id="AT1G60680"/>
<dbReference type="TAIR" id="AT1G60680"/>
<dbReference type="eggNOG" id="KOG1575">
    <property type="taxonomic scope" value="Eukaryota"/>
</dbReference>
<dbReference type="HOGENOM" id="CLU_023205_2_1_1"/>
<dbReference type="InParanoid" id="Q84M96"/>
<dbReference type="OMA" id="HIVANGR"/>
<dbReference type="PhylomeDB" id="Q84M96"/>
<dbReference type="BioCyc" id="ARA:AT1G60680-MONOMER"/>
<dbReference type="PRO" id="PR:Q84M96"/>
<dbReference type="Proteomes" id="UP000006548">
    <property type="component" value="Chromosome 1"/>
</dbReference>
<dbReference type="ExpressionAtlas" id="Q84M96">
    <property type="expression patterns" value="baseline and differential"/>
</dbReference>
<dbReference type="GO" id="GO:0016491">
    <property type="term" value="F:oxidoreductase activity"/>
    <property type="evidence" value="ECO:0007669"/>
    <property type="project" value="UniProtKB-KW"/>
</dbReference>
<dbReference type="CDD" id="cd19145">
    <property type="entry name" value="AKR_AKR13D1"/>
    <property type="match status" value="1"/>
</dbReference>
<dbReference type="FunFam" id="3.20.20.100:FF:000048">
    <property type="entry name" value="Probable aldo-keto reductase 4"/>
    <property type="match status" value="1"/>
</dbReference>
<dbReference type="Gene3D" id="3.20.20.100">
    <property type="entry name" value="NADP-dependent oxidoreductase domain"/>
    <property type="match status" value="1"/>
</dbReference>
<dbReference type="InterPro" id="IPR020471">
    <property type="entry name" value="AKR"/>
</dbReference>
<dbReference type="InterPro" id="IPR050791">
    <property type="entry name" value="Aldo-Keto_reductase"/>
</dbReference>
<dbReference type="InterPro" id="IPR023210">
    <property type="entry name" value="NADP_OxRdtase_dom"/>
</dbReference>
<dbReference type="InterPro" id="IPR036812">
    <property type="entry name" value="NADP_OxRdtase_dom_sf"/>
</dbReference>
<dbReference type="PANTHER" id="PTHR43625">
    <property type="entry name" value="AFLATOXIN B1 ALDEHYDE REDUCTASE"/>
    <property type="match status" value="1"/>
</dbReference>
<dbReference type="PANTHER" id="PTHR43625:SF40">
    <property type="entry name" value="ALDO-KETO REDUCTASE YAKC [NADP(+)]"/>
    <property type="match status" value="1"/>
</dbReference>
<dbReference type="Pfam" id="PF00248">
    <property type="entry name" value="Aldo_ket_red"/>
    <property type="match status" value="1"/>
</dbReference>
<dbReference type="PRINTS" id="PR00069">
    <property type="entry name" value="ALDKETRDTASE"/>
</dbReference>
<dbReference type="SUPFAM" id="SSF51430">
    <property type="entry name" value="NAD(P)-linked oxidoreductase"/>
    <property type="match status" value="1"/>
</dbReference>
<accession>Q84M96</accession>
<accession>O22706</accession>
<keyword id="KW-0521">NADP</keyword>
<keyword id="KW-0560">Oxidoreductase</keyword>
<keyword id="KW-1185">Reference proteome</keyword>
<name>ALKR2_ARATH</name>
<proteinExistence type="evidence at transcript level"/>
<evidence type="ECO:0000250" key="1"/>
<evidence type="ECO:0000305" key="2"/>
<organism>
    <name type="scientific">Arabidopsis thaliana</name>
    <name type="common">Mouse-ear cress</name>
    <dbReference type="NCBI Taxonomy" id="3702"/>
    <lineage>
        <taxon>Eukaryota</taxon>
        <taxon>Viridiplantae</taxon>
        <taxon>Streptophyta</taxon>
        <taxon>Embryophyta</taxon>
        <taxon>Tracheophyta</taxon>
        <taxon>Spermatophyta</taxon>
        <taxon>Magnoliopsida</taxon>
        <taxon>eudicotyledons</taxon>
        <taxon>Gunneridae</taxon>
        <taxon>Pentapetalae</taxon>
        <taxon>rosids</taxon>
        <taxon>malvids</taxon>
        <taxon>Brassicales</taxon>
        <taxon>Brassicaceae</taxon>
        <taxon>Camelineae</taxon>
        <taxon>Arabidopsis</taxon>
    </lineage>
</organism>
<comment type="similarity">
    <text evidence="2">Belongs to the aldo/keto reductase family. Aldo/keto reductase 13 subfamily.</text>
</comment>
<comment type="sequence caution" evidence="2">
    <conflict type="erroneous gene model prediction">
        <sequence resource="EMBL-CDS" id="AAB71980"/>
    </conflict>
</comment>
<comment type="sequence caution" evidence="2">
    <conflict type="erroneous initiation">
        <sequence resource="EMBL-CDS" id="AAB71980"/>
    </conflict>
    <text>Truncated N-terminus.</text>
</comment>
<feature type="chain" id="PRO_0000415741" description="Probable aldo-keto reductase 2">
    <location>
        <begin position="1"/>
        <end position="346"/>
    </location>
</feature>
<feature type="active site" description="Proton donor" evidence="1">
    <location>
        <position position="63"/>
    </location>
</feature>
<feature type="binding site" evidence="1">
    <location>
        <position position="131"/>
    </location>
    <ligand>
        <name>substrate</name>
    </ligand>
</feature>
<feature type="binding site" evidence="1">
    <location>
        <begin position="210"/>
        <end position="220"/>
    </location>
    <ligand>
        <name>NADP(+)</name>
        <dbReference type="ChEBI" id="CHEBI:58349"/>
    </ligand>
</feature>
<reference key="1">
    <citation type="journal article" date="2000" name="Nature">
        <title>Sequence and analysis of chromosome 1 of the plant Arabidopsis thaliana.</title>
        <authorList>
            <person name="Theologis A."/>
            <person name="Ecker J.R."/>
            <person name="Palm C.J."/>
            <person name="Federspiel N.A."/>
            <person name="Kaul S."/>
            <person name="White O."/>
            <person name="Alonso J."/>
            <person name="Altafi H."/>
            <person name="Araujo R."/>
            <person name="Bowman C.L."/>
            <person name="Brooks S.Y."/>
            <person name="Buehler E."/>
            <person name="Chan A."/>
            <person name="Chao Q."/>
            <person name="Chen H."/>
            <person name="Cheuk R.F."/>
            <person name="Chin C.W."/>
            <person name="Chung M.K."/>
            <person name="Conn L."/>
            <person name="Conway A.B."/>
            <person name="Conway A.R."/>
            <person name="Creasy T.H."/>
            <person name="Dewar K."/>
            <person name="Dunn P."/>
            <person name="Etgu P."/>
            <person name="Feldblyum T.V."/>
            <person name="Feng J.-D."/>
            <person name="Fong B."/>
            <person name="Fujii C.Y."/>
            <person name="Gill J.E."/>
            <person name="Goldsmith A.D."/>
            <person name="Haas B."/>
            <person name="Hansen N.F."/>
            <person name="Hughes B."/>
            <person name="Huizar L."/>
            <person name="Hunter J.L."/>
            <person name="Jenkins J."/>
            <person name="Johnson-Hopson C."/>
            <person name="Khan S."/>
            <person name="Khaykin E."/>
            <person name="Kim C.J."/>
            <person name="Koo H.L."/>
            <person name="Kremenetskaia I."/>
            <person name="Kurtz D.B."/>
            <person name="Kwan A."/>
            <person name="Lam B."/>
            <person name="Langin-Hooper S."/>
            <person name="Lee A."/>
            <person name="Lee J.M."/>
            <person name="Lenz C.A."/>
            <person name="Li J.H."/>
            <person name="Li Y.-P."/>
            <person name="Lin X."/>
            <person name="Liu S.X."/>
            <person name="Liu Z.A."/>
            <person name="Luros J.S."/>
            <person name="Maiti R."/>
            <person name="Marziali A."/>
            <person name="Militscher J."/>
            <person name="Miranda M."/>
            <person name="Nguyen M."/>
            <person name="Nierman W.C."/>
            <person name="Osborne B.I."/>
            <person name="Pai G."/>
            <person name="Peterson J."/>
            <person name="Pham P.K."/>
            <person name="Rizzo M."/>
            <person name="Rooney T."/>
            <person name="Rowley D."/>
            <person name="Sakano H."/>
            <person name="Salzberg S.L."/>
            <person name="Schwartz J.R."/>
            <person name="Shinn P."/>
            <person name="Southwick A.M."/>
            <person name="Sun H."/>
            <person name="Tallon L.J."/>
            <person name="Tambunga G."/>
            <person name="Toriumi M.J."/>
            <person name="Town C.D."/>
            <person name="Utterback T."/>
            <person name="Van Aken S."/>
            <person name="Vaysberg M."/>
            <person name="Vysotskaia V.S."/>
            <person name="Walker M."/>
            <person name="Wu D."/>
            <person name="Yu G."/>
            <person name="Fraser C.M."/>
            <person name="Venter J.C."/>
            <person name="Davis R.W."/>
        </authorList>
    </citation>
    <scope>NUCLEOTIDE SEQUENCE [LARGE SCALE GENOMIC DNA]</scope>
    <source>
        <strain>cv. Columbia</strain>
    </source>
</reference>
<reference key="2">
    <citation type="journal article" date="2017" name="Plant J.">
        <title>Araport11: a complete reannotation of the Arabidopsis thaliana reference genome.</title>
        <authorList>
            <person name="Cheng C.Y."/>
            <person name="Krishnakumar V."/>
            <person name="Chan A.P."/>
            <person name="Thibaud-Nissen F."/>
            <person name="Schobel S."/>
            <person name="Town C.D."/>
        </authorList>
    </citation>
    <scope>GENOME REANNOTATION</scope>
    <source>
        <strain>cv. Columbia</strain>
    </source>
</reference>
<reference key="3">
    <citation type="journal article" date="2003" name="Science">
        <title>Empirical analysis of transcriptional activity in the Arabidopsis genome.</title>
        <authorList>
            <person name="Yamada K."/>
            <person name="Lim J."/>
            <person name="Dale J.M."/>
            <person name="Chen H."/>
            <person name="Shinn P."/>
            <person name="Palm C.J."/>
            <person name="Southwick A.M."/>
            <person name="Wu H.C."/>
            <person name="Kim C.J."/>
            <person name="Nguyen M."/>
            <person name="Pham P.K."/>
            <person name="Cheuk R.F."/>
            <person name="Karlin-Newmann G."/>
            <person name="Liu S.X."/>
            <person name="Lam B."/>
            <person name="Sakano H."/>
            <person name="Wu T."/>
            <person name="Yu G."/>
            <person name="Miranda M."/>
            <person name="Quach H.L."/>
            <person name="Tripp M."/>
            <person name="Chang C.H."/>
            <person name="Lee J.M."/>
            <person name="Toriumi M.J."/>
            <person name="Chan M.M."/>
            <person name="Tang C.C."/>
            <person name="Onodera C.S."/>
            <person name="Deng J.M."/>
            <person name="Akiyama K."/>
            <person name="Ansari Y."/>
            <person name="Arakawa T."/>
            <person name="Banh J."/>
            <person name="Banno F."/>
            <person name="Bowser L."/>
            <person name="Brooks S.Y."/>
            <person name="Carninci P."/>
            <person name="Chao Q."/>
            <person name="Choy N."/>
            <person name="Enju A."/>
            <person name="Goldsmith A.D."/>
            <person name="Gurjal M."/>
            <person name="Hansen N.F."/>
            <person name="Hayashizaki Y."/>
            <person name="Johnson-Hopson C."/>
            <person name="Hsuan V.W."/>
            <person name="Iida K."/>
            <person name="Karnes M."/>
            <person name="Khan S."/>
            <person name="Koesema E."/>
            <person name="Ishida J."/>
            <person name="Jiang P.X."/>
            <person name="Jones T."/>
            <person name="Kawai J."/>
            <person name="Kamiya A."/>
            <person name="Meyers C."/>
            <person name="Nakajima M."/>
            <person name="Narusaka M."/>
            <person name="Seki M."/>
            <person name="Sakurai T."/>
            <person name="Satou M."/>
            <person name="Tamse R."/>
            <person name="Vaysberg M."/>
            <person name="Wallender E.K."/>
            <person name="Wong C."/>
            <person name="Yamamura Y."/>
            <person name="Yuan S."/>
            <person name="Shinozaki K."/>
            <person name="Davis R.W."/>
            <person name="Theologis A."/>
            <person name="Ecker J.R."/>
        </authorList>
    </citation>
    <scope>NUCLEOTIDE SEQUENCE [LARGE SCALE MRNA]</scope>
    <source>
        <strain>cv. Columbia</strain>
    </source>
</reference>
<reference key="4">
    <citation type="submission" date="2006-07" db="EMBL/GenBank/DDBJ databases">
        <title>Large-scale analysis of RIKEN Arabidopsis full-length (RAFL) cDNAs.</title>
        <authorList>
            <person name="Totoki Y."/>
            <person name="Seki M."/>
            <person name="Ishida J."/>
            <person name="Nakajima M."/>
            <person name="Enju A."/>
            <person name="Kamiya A."/>
            <person name="Narusaka M."/>
            <person name="Shin-i T."/>
            <person name="Nakagawa M."/>
            <person name="Sakamoto N."/>
            <person name="Oishi K."/>
            <person name="Kohara Y."/>
            <person name="Kobayashi M."/>
            <person name="Toyoda A."/>
            <person name="Sakaki Y."/>
            <person name="Sakurai T."/>
            <person name="Iida K."/>
            <person name="Akiyama K."/>
            <person name="Satou M."/>
            <person name="Toyoda T."/>
            <person name="Konagaya A."/>
            <person name="Carninci P."/>
            <person name="Kawai J."/>
            <person name="Hayashizaki Y."/>
            <person name="Shinozaki K."/>
        </authorList>
    </citation>
    <scope>NUCLEOTIDE SEQUENCE [LARGE SCALE MRNA]</scope>
    <source>
        <strain>cv. Columbia</strain>
    </source>
</reference>
<protein>
    <recommendedName>
        <fullName>Probable aldo-keto reductase 2</fullName>
        <ecNumber>1.1.1.-</ecNumber>
    </recommendedName>
    <alternativeName>
        <fullName>ARF-GAP domain-containing protein 2</fullName>
    </alternativeName>
</protein>
<gene>
    <name type="primary">AGD2</name>
    <name type="ordered locus">At1g60680</name>
    <name type="ORF">F8A5.20</name>
</gene>
<sequence length="346" mass="38269">MAEACRVRRMKLGSQGLEVSAQGLGCMALSARYGAPKPETDAIALLHHAINSGVTFFDTSDMYGPETNELLLGKALKDGVKEKVELATKFGFFIVEGEISEVRGDPEYVRAACEASLKRLDIACIDLYYQHRIDTRVPIEITMRELKKLVEEGKIKYIGLSEASASTIRRAHAVHPITAVQIEWSLWSRDAEEDIIPICRELGIGIVAYSPLGRGFLAAGPKLAENLENDDFRKTLPRFQQENVDHNKILFEKVSAMAEKKGCTPAQLALAWVHHQGDDVCPIPGTTKIENLNQNIRALSVKLTPEEISELDSLAKPESVKGERYMASMSTFKNSNTPPLSSWKAT</sequence>